<keyword id="KW-0217">Developmental protein</keyword>
<keyword id="KW-0472">Membrane</keyword>
<keyword id="KW-1185">Reference proteome</keyword>
<keyword id="KW-0812">Transmembrane</keyword>
<keyword id="KW-1133">Transmembrane helix</keyword>
<feature type="chain" id="PRO_0000339234" description="Retrotransposon-like protein 1">
    <location>
        <begin position="1"/>
        <end position="1744"/>
    </location>
</feature>
<feature type="transmembrane region" description="Helical" evidence="1">
    <location>
        <begin position="1473"/>
        <end position="1493"/>
    </location>
</feature>
<feature type="transmembrane region" description="Helical" evidence="1">
    <location>
        <begin position="1520"/>
        <end position="1540"/>
    </location>
</feature>
<feature type="region of interest" description="Disordered" evidence="2">
    <location>
        <begin position="1"/>
        <end position="416"/>
    </location>
</feature>
<feature type="region of interest" description="Disordered" evidence="2">
    <location>
        <begin position="823"/>
        <end position="859"/>
    </location>
</feature>
<feature type="region of interest" description="Disordered" evidence="2">
    <location>
        <begin position="1287"/>
        <end position="1439"/>
    </location>
</feature>
<feature type="compositionally biased region" description="Low complexity" evidence="2">
    <location>
        <begin position="19"/>
        <end position="30"/>
    </location>
</feature>
<feature type="compositionally biased region" description="Polar residues" evidence="2">
    <location>
        <begin position="31"/>
        <end position="40"/>
    </location>
</feature>
<feature type="compositionally biased region" description="Low complexity" evidence="2">
    <location>
        <begin position="41"/>
        <end position="80"/>
    </location>
</feature>
<feature type="compositionally biased region" description="Polar residues" evidence="2">
    <location>
        <begin position="269"/>
        <end position="318"/>
    </location>
</feature>
<feature type="compositionally biased region" description="Low complexity" evidence="2">
    <location>
        <begin position="332"/>
        <end position="361"/>
    </location>
</feature>
<feature type="compositionally biased region" description="Acidic residues" evidence="2">
    <location>
        <begin position="385"/>
        <end position="407"/>
    </location>
</feature>
<feature type="compositionally biased region" description="Acidic residues" evidence="2">
    <location>
        <begin position="837"/>
        <end position="846"/>
    </location>
</feature>
<feature type="compositionally biased region" description="Acidic residues" evidence="2">
    <location>
        <begin position="1291"/>
        <end position="1437"/>
    </location>
</feature>
<organism>
    <name type="scientific">Mus musculus</name>
    <name type="common">Mouse</name>
    <dbReference type="NCBI Taxonomy" id="10090"/>
    <lineage>
        <taxon>Eukaryota</taxon>
        <taxon>Metazoa</taxon>
        <taxon>Chordata</taxon>
        <taxon>Craniata</taxon>
        <taxon>Vertebrata</taxon>
        <taxon>Euteleostomi</taxon>
        <taxon>Mammalia</taxon>
        <taxon>Eutheria</taxon>
        <taxon>Euarchontoglires</taxon>
        <taxon>Glires</taxon>
        <taxon>Rodentia</taxon>
        <taxon>Myomorpha</taxon>
        <taxon>Muroidea</taxon>
        <taxon>Muridae</taxon>
        <taxon>Murinae</taxon>
        <taxon>Mus</taxon>
        <taxon>Mus</taxon>
    </lineage>
</organism>
<sequence length="1744" mass="199048">MIEPSEDSFETMMELKNPSSKQMESSEGSSNTVEETPGSSGAQAGAQAGAQAEAQAETQVEAQAEAQAEAQVEAQVEAQAGSDSGPAQEEKEPPSGPLKEMQELPTNLLQEVEEPSSGPHQEMQELPTDLLQEVEEPSSGPHQEMQELPTDLLREVEEPSSGPYQEMQELPTDLLREVEEPSSGPYQEMQELPTDLLREVEEPSSGPYQEMQELPTDLLREVEEPSSGPYQEMQELPTDLLREVEEPSSDPCEASSNDLPQDMEESSDDGSNQESSDGSNHELSNGSNHESSFGSNPESSDVSNLESSGGSNQESSDGSQKESSYDSNPELSDNSNQELSDNSNQESSDSSNQSSDISNQEGSEPLSEASDYSMDETINSSETQSDQDDTDLGDDEEEEEEEGGEEEGQPKNSPEEVVATMGNVISLFLRMQDLKEQQRVAERLMMQAINEGRLPSLRPFSGDRRDYHEFVVLCQMTMQNYPSMLYNDELRVKFVIRHLTDLALEWANDLVEQNSPVINNFSAFLEAMSEKFEYRQTLRVAEDAMFNIRQGNRCAADYINEFRGLIPTLGWPDEVLQAHLCQGLNEEIRHYLFRIPQPNSLDNLIVLVLQLEEKLAERRALLRLPPESRPRSVAWMDAPAPEKWRVSSWLPNEFHPDIDRDHLFLLLLVRVDPYHSVAVRALVDSGAEGNYMDERFAQEHYVELYEKPYPQIIQGVDGIPIGNEPVWLCTEPLVCVHQKHYEYIEFDILPSPNFSIVLGMKWLRTHAPEVDWMRGRCTFHSPYCLRNCFTPPPPCIALETYSISLLPGLPHTYSDLADVFNPREADDETSDQPSSDGSDDLSESEPSELQQAGDSDQSGVFYESGARETLEPVSARMQEKARQQEKAREQEEYWILYDMLTDRQDYTQMVPELFDQLHGAAWFTKLELLGIKESEMRHTVTHTEDTWRASFGFGLHQMRCYRPFTMNSYSDEGNNIVHFILKDILGLFVICHGREVLVYSMSQEEHSQHVRQVLVRFRYHNIYCSLDKTQFHRQTAEILGFNISPKGVKLNKNLMNLIVGCPVPGSRRCLQSVIDLVYPYRHFVENFAVIAAPLVRQLLSSEPYYWGEEEQEALESLKRAFRKSPVLYHPKPQNPFYLETDITGSFLSASLVQTDDETGKKSTCAFYSRPLSTMEVEYPRVEMRILPIRAAFMVWCRYLENTEEPIMILLNTEDLASLNNDRLTVLLPGHWVFFFSHFNFGVMEMPAEGDTQALFRRCWNQRGFRARFLRPLLLMSIRANLRYFDRSSETEDKEDDEEEEEEDGEEEEGEEEEDGEEEEGEEEEDGEEEEEEEEDDEEEEGEEEEDGEEEEGEEEEDGEEEEGEEEEDGEEEEGEEEGEEEEEGEEEEEEEEDEEEEEEEEEEEEEEEEEEEEEEEEEEEEEEDEEEEDEEEEDEEVPSMVRELLAAIPMDHILNGLLAHFSVAQIRAVVLNFFRGLLYWKSLLGVAAVLVMLRARQPLSPVPAPNLEVARPQHRHTLRLILDSTLIASSGMATAIAQLLSQMPPLVGANTLPARELAELFLGPRCWHRNALHSQPPRGMRFTPGFWLTLCEFFGVRVNPEDDVFPDPYQHRYLELHVVGDEDVVLREALQDDLQRYRQCGLHDGLQDTSQDAQDNDVQEDLFGDQEAVTFRPRNLLDPEVLDFLNNRLLYTLGTDGRLTLLSRDQVAQALTRFLAMASRMALPSPAREQARLEELSDSDDELD</sequence>
<reference key="1">
    <citation type="journal article" date="2009" name="PLoS Biol.">
        <title>Lineage-specific biology revealed by a finished genome assembly of the mouse.</title>
        <authorList>
            <person name="Church D.M."/>
            <person name="Goodstadt L."/>
            <person name="Hillier L.W."/>
            <person name="Zody M.C."/>
            <person name="Goldstein S."/>
            <person name="She X."/>
            <person name="Bult C.J."/>
            <person name="Agarwala R."/>
            <person name="Cherry J.L."/>
            <person name="DiCuccio M."/>
            <person name="Hlavina W."/>
            <person name="Kapustin Y."/>
            <person name="Meric P."/>
            <person name="Maglott D."/>
            <person name="Birtle Z."/>
            <person name="Marques A.C."/>
            <person name="Graves T."/>
            <person name="Zhou S."/>
            <person name="Teague B."/>
            <person name="Potamousis K."/>
            <person name="Churas C."/>
            <person name="Place M."/>
            <person name="Herschleb J."/>
            <person name="Runnheim R."/>
            <person name="Forrest D."/>
            <person name="Amos-Landgraf J."/>
            <person name="Schwartz D.C."/>
            <person name="Cheng Z."/>
            <person name="Lindblad-Toh K."/>
            <person name="Eichler E.E."/>
            <person name="Ponting C.P."/>
        </authorList>
    </citation>
    <scope>NUCLEOTIDE SEQUENCE [LARGE SCALE GENOMIC DNA]</scope>
    <source>
        <strain>C57BL/6J</strain>
    </source>
</reference>
<reference key="2">
    <citation type="journal article" date="2003" name="Nat. Genet.">
        <title>Imprinted microRNA genes transcribed antisense to a reciprocally imprinted retrotransposon-like gene.</title>
        <authorList>
            <person name="Seitz H."/>
            <person name="Youngson N."/>
            <person name="Lin S.-P."/>
            <person name="Dalbert S."/>
            <person name="Paulsen M."/>
            <person name="Bachellerie J.-P."/>
            <person name="Ferguson-Smith A.C."/>
            <person name="Cavaille J."/>
        </authorList>
    </citation>
    <scope>IDENTIFICATION</scope>
</reference>
<reference key="3">
    <citation type="journal article" date="2003" name="Nat. Genet.">
        <title>Asymmetric regulation of imprinting on the maternal and paternal chromosomes at the Dlk1-Gtl2 imprinted cluster on mouse chromosome 12.</title>
        <authorList>
            <person name="Lin S.-P."/>
            <person name="Youngson N."/>
            <person name="Takada S."/>
            <person name="Seitz H."/>
            <person name="Reik W."/>
            <person name="Paulsen M."/>
            <person name="Cavaille J."/>
            <person name="Ferguson-Smith A.C."/>
        </authorList>
    </citation>
    <scope>IMPRINTING</scope>
</reference>
<reference key="4">
    <citation type="journal article" date="2005" name="Cytogenet. Genome Res.">
        <title>A family of neofunctionalized Ty3/gypsy retrotransposon genes in mammalian genomes.</title>
        <authorList>
            <person name="Brandt J."/>
            <person name="Veith A.-M."/>
            <person name="Volff J.-N."/>
        </authorList>
    </citation>
    <scope>GENE FAMILY</scope>
</reference>
<reference key="5">
    <citation type="journal article" date="2007" name="Funct. Integr. Genomics">
        <title>Adipogenesis in mouse 3T3L1 cells: the effects of Rtl1 over-expression.</title>
        <authorList>
            <person name="Leeton L.A."/>
            <person name="Tellam R.L."/>
        </authorList>
    </citation>
    <scope>INDUCTION</scope>
</reference>
<reference key="6">
    <citation type="journal article" date="2008" name="Hum. Mol. Genet.">
        <title>Coordinated diurnal regulation of genes from the Dlk1-Dio3 imprinted domain: implications for regulation of clusters of non-paralogous genes.</title>
        <authorList>
            <person name="Labialle S."/>
            <person name="Yang L."/>
            <person name="Ruan X."/>
            <person name="Villemain A."/>
            <person name="Schmidt J.V."/>
            <person name="Hernandez A."/>
            <person name="Wiltshire T."/>
            <person name="Cermakian N."/>
            <person name="Naumova A.K."/>
        </authorList>
    </citation>
    <scope>DEVELOPMENTAL STAGE</scope>
</reference>
<reference key="7">
    <citation type="journal article" date="2008" name="Nat. Genet.">
        <title>Role of retrotransposon-derived imprinted gene, Rtl1, in the feto-maternal interface of mouse placenta.</title>
        <authorList>
            <person name="Sekita Y."/>
            <person name="Wagatsuma H."/>
            <person name="Nakamura K."/>
            <person name="Ono R."/>
            <person name="Kagami M."/>
            <person name="Wakisaka N."/>
            <person name="Hino T."/>
            <person name="Suzuki-Migishima R."/>
            <person name="Kohda T."/>
            <person name="Ogura A."/>
            <person name="Ogata T."/>
            <person name="Yokoyama M."/>
            <person name="Kaneko-Ishino T."/>
            <person name="Ishino F."/>
        </authorList>
    </citation>
    <scope>FUNCTION</scope>
    <scope>DISRUPTION PHENOTYPE</scope>
    <scope>DEVELOPMENTAL STAGE</scope>
    <scope>TISSUE SPECIFICITY</scope>
</reference>
<name>RTL1_MOUSE</name>
<accession>Q7M732</accession>
<proteinExistence type="evidence at transcript level"/>
<gene>
    <name type="primary">Rtl1</name>
    <name type="synonym">Mar1</name>
    <name type="synonym">Mart1</name>
    <name type="synonym">Peg11</name>
</gene>
<dbReference type="EMBL" id="AC152063">
    <property type="status" value="NOT_ANNOTATED_CDS"/>
    <property type="molecule type" value="Genomic_DNA"/>
</dbReference>
<dbReference type="EMBL" id="BK001261">
    <property type="protein sequence ID" value="DAA01153.1"/>
    <property type="molecule type" value="mRNA"/>
</dbReference>
<dbReference type="CCDS" id="CCDS26170.1"/>
<dbReference type="RefSeq" id="NP_908998.1">
    <property type="nucleotide sequence ID" value="NM_184109.2"/>
</dbReference>
<dbReference type="RefSeq" id="XP_030102657.1">
    <property type="nucleotide sequence ID" value="XM_030246797.2"/>
</dbReference>
<dbReference type="SMR" id="Q7M732"/>
<dbReference type="BioGRID" id="237288">
    <property type="interactions" value="1"/>
</dbReference>
<dbReference type="FunCoup" id="Q7M732">
    <property type="interactions" value="13"/>
</dbReference>
<dbReference type="STRING" id="10090.ENSMUSP00000115957"/>
<dbReference type="iPTMnet" id="Q7M732"/>
<dbReference type="PhosphoSitePlus" id="Q7M732"/>
<dbReference type="jPOST" id="Q7M732"/>
<dbReference type="PaxDb" id="10090-ENSMUSP00000115957"/>
<dbReference type="ProteomicsDB" id="260866"/>
<dbReference type="Pumba" id="Q7M732"/>
<dbReference type="DNASU" id="353326"/>
<dbReference type="Ensembl" id="ENSMUST00000149046.4">
    <property type="protein sequence ID" value="ENSMUSP00000115957.3"/>
    <property type="gene ID" value="ENSMUSG00000085925.4"/>
</dbReference>
<dbReference type="GeneID" id="353326"/>
<dbReference type="KEGG" id="mmu:353326"/>
<dbReference type="UCSC" id="uc007paw.2">
    <property type="organism name" value="mouse"/>
</dbReference>
<dbReference type="AGR" id="MGI:2656842"/>
<dbReference type="CTD" id="388015"/>
<dbReference type="MGI" id="MGI:2656842">
    <property type="gene designation" value="Rtl1"/>
</dbReference>
<dbReference type="VEuPathDB" id="HostDB:ENSMUSG00000085925"/>
<dbReference type="eggNOG" id="KOG0017">
    <property type="taxonomic scope" value="Eukaryota"/>
</dbReference>
<dbReference type="eggNOG" id="KOG1075">
    <property type="taxonomic scope" value="Eukaryota"/>
</dbReference>
<dbReference type="GeneTree" id="ENSGT01050000245673"/>
<dbReference type="HOGENOM" id="CLU_002743_1_0_1"/>
<dbReference type="InParanoid" id="Q7M732"/>
<dbReference type="OMA" id="EFIVLCQ"/>
<dbReference type="OrthoDB" id="8000983at2759"/>
<dbReference type="PhylomeDB" id="Q7M732"/>
<dbReference type="TreeFam" id="TF342365"/>
<dbReference type="BioGRID-ORCS" id="353326">
    <property type="hits" value="3 hits in 76 CRISPR screens"/>
</dbReference>
<dbReference type="ChiTaRS" id="Rtl1">
    <property type="organism name" value="mouse"/>
</dbReference>
<dbReference type="PRO" id="PR:Q7M732"/>
<dbReference type="Proteomes" id="UP000000589">
    <property type="component" value="Chromosome 12"/>
</dbReference>
<dbReference type="RNAct" id="Q7M732">
    <property type="molecule type" value="protein"/>
</dbReference>
<dbReference type="Bgee" id="ENSMUSG00000085925">
    <property type="expression patterns" value="Expressed in crus of diaphragm and 39 other cell types or tissues"/>
</dbReference>
<dbReference type="ExpressionAtlas" id="Q7M732">
    <property type="expression patterns" value="baseline and differential"/>
</dbReference>
<dbReference type="GO" id="GO:0016020">
    <property type="term" value="C:membrane"/>
    <property type="evidence" value="ECO:0007669"/>
    <property type="project" value="UniProtKB-SubCell"/>
</dbReference>
<dbReference type="GO" id="GO:0030018">
    <property type="term" value="C:Z disc"/>
    <property type="evidence" value="ECO:0000314"/>
    <property type="project" value="MGI"/>
</dbReference>
<dbReference type="GO" id="GO:0001525">
    <property type="term" value="P:angiogenesis"/>
    <property type="evidence" value="ECO:0000315"/>
    <property type="project" value="MGI"/>
</dbReference>
<dbReference type="GO" id="GO:0001892">
    <property type="term" value="P:embryonic placenta development"/>
    <property type="evidence" value="ECO:0000315"/>
    <property type="project" value="MGI"/>
</dbReference>
<dbReference type="GO" id="GO:0010467">
    <property type="term" value="P:gene expression"/>
    <property type="evidence" value="ECO:0000315"/>
    <property type="project" value="MGI"/>
</dbReference>
<dbReference type="GO" id="GO:0060711">
    <property type="term" value="P:labyrinthine layer development"/>
    <property type="evidence" value="ECO:0000315"/>
    <property type="project" value="MGI"/>
</dbReference>
<dbReference type="GO" id="GO:0001890">
    <property type="term" value="P:placenta development"/>
    <property type="evidence" value="ECO:0000314"/>
    <property type="project" value="MGI"/>
</dbReference>
<dbReference type="GO" id="GO:0014841">
    <property type="term" value="P:skeletal muscle satellite cell proliferation"/>
    <property type="evidence" value="ECO:0000315"/>
    <property type="project" value="MGI"/>
</dbReference>
<dbReference type="GO" id="GO:0007519">
    <property type="term" value="P:skeletal muscle tissue development"/>
    <property type="evidence" value="ECO:0000314"/>
    <property type="project" value="MGI"/>
</dbReference>
<dbReference type="CDD" id="cd00303">
    <property type="entry name" value="retropepsin_like"/>
    <property type="match status" value="1"/>
</dbReference>
<dbReference type="Gene3D" id="3.30.70.270">
    <property type="match status" value="2"/>
</dbReference>
<dbReference type="Gene3D" id="2.40.70.10">
    <property type="entry name" value="Acid Proteases"/>
    <property type="match status" value="1"/>
</dbReference>
<dbReference type="InterPro" id="IPR043502">
    <property type="entry name" value="DNA/RNA_pol_sf"/>
</dbReference>
<dbReference type="InterPro" id="IPR032549">
    <property type="entry name" value="DUF4939"/>
</dbReference>
<dbReference type="InterPro" id="IPR021109">
    <property type="entry name" value="Peptidase_aspartic_dom_sf"/>
</dbReference>
<dbReference type="InterPro" id="IPR043128">
    <property type="entry name" value="Rev_trsase/Diguanyl_cyclase"/>
</dbReference>
<dbReference type="InterPro" id="IPR041577">
    <property type="entry name" value="RT_RNaseH_2"/>
</dbReference>
<dbReference type="InterPro" id="IPR032567">
    <property type="entry name" value="RTL1-rel"/>
</dbReference>
<dbReference type="PANTHER" id="PTHR15503">
    <property type="entry name" value="LDOC1 RELATED"/>
    <property type="match status" value="1"/>
</dbReference>
<dbReference type="PANTHER" id="PTHR15503:SF39">
    <property type="entry name" value="RETROTRANSPOSON-LIKE PROTEIN 1"/>
    <property type="match status" value="1"/>
</dbReference>
<dbReference type="Pfam" id="PF16297">
    <property type="entry name" value="DUF4939"/>
    <property type="match status" value="1"/>
</dbReference>
<dbReference type="Pfam" id="PF17919">
    <property type="entry name" value="RT_RNaseH_2"/>
    <property type="match status" value="1"/>
</dbReference>
<dbReference type="SUPFAM" id="SSF50630">
    <property type="entry name" value="Acid proteases"/>
    <property type="match status" value="1"/>
</dbReference>
<dbReference type="SUPFAM" id="SSF56672">
    <property type="entry name" value="DNA/RNA polymerases"/>
    <property type="match status" value="1"/>
</dbReference>
<protein>
    <recommendedName>
        <fullName>Retrotransposon-like protein 1</fullName>
    </recommendedName>
    <alternativeName>
        <fullName>Mammalian retrotransposon derived protein 1</fullName>
    </alternativeName>
    <alternativeName>
        <fullName>Paternally expressed gene 11 protein</fullName>
    </alternativeName>
    <alternativeName>
        <fullName>Retrotransposon-derived protein PEG11</fullName>
    </alternativeName>
</protein>
<evidence type="ECO:0000255" key="1"/>
<evidence type="ECO:0000256" key="2">
    <source>
        <dbReference type="SAM" id="MobiDB-lite"/>
    </source>
</evidence>
<evidence type="ECO:0000269" key="3">
    <source>
    </source>
</evidence>
<evidence type="ECO:0000269" key="4">
    <source>
    </source>
</evidence>
<evidence type="ECO:0000269" key="5">
    <source>
    </source>
</evidence>
<evidence type="ECO:0000305" key="6"/>
<comment type="function">
    <text evidence="5">Plays an essential role in capillaries endothelial cells for the maintenance of feto-maternal interface and for development of the placenta.</text>
</comment>
<comment type="subcellular location">
    <subcellularLocation>
        <location evidence="6">Membrane</location>
        <topology evidence="6">Multi-pass membrane protein</topology>
    </subcellularLocation>
</comment>
<comment type="tissue specificity">
    <text evidence="5">Expressed in placenta and in various tissues in late-fetal stage.</text>
</comment>
<comment type="developmental stage">
    <text evidence="4 5">Increased expression throughout development from 9.5 dpc to 18.5 dpc in placenta and, from 12.5 dpc to 15.5 dpc in embryo. Barely detectable in adult brain and midbrains of 14.5 dpc, but abundant at 8.5 dpc.</text>
</comment>
<comment type="induction">
    <text evidence="3">Down-regulated during time-course of induced adipogenesis in 3T3L1 cells; Lipid accumulation is unchanged during adipocyte differentiation when Rtl1 is overexpressed.</text>
</comment>
<comment type="disruption phenotype">
    <text evidence="5">Mice suffer from late fetal or neonatal lethality. Mice overexpressing Rtl1 show notable overgrowth and morphological abnormalities of the placenta.</text>
</comment>
<comment type="miscellaneous">
    <text>Rtl1 is one of at least 11 genes called Mar or Mart related to long terminal repeat retrotransposons. They do not correspond to functional retrotransposons, but rather to neofunctionalized retrotransposons genes.</text>
</comment>
<comment type="miscellaneous">
    <text>Rtl1 is an imprinted gene located in a cluster of imprinted genes on distal chromosome 12. It is expressed from the paternal chromosome and has an antisense transcript expressed from the maternal chromosome containing 2 microRNAs, mir-136 and mir-127, with full complementarity to Rtl1; mir-136 and mir-127 are processed from an antisense transcript, Rtl1as, and may function as small interfering RNAs to silence Rtl1.</text>
</comment>